<proteinExistence type="evidence at protein level"/>
<name>ABHEB_HUMAN</name>
<organism>
    <name type="scientific">Homo sapiens</name>
    <name type="common">Human</name>
    <dbReference type="NCBI Taxonomy" id="9606"/>
    <lineage>
        <taxon>Eukaryota</taxon>
        <taxon>Metazoa</taxon>
        <taxon>Chordata</taxon>
        <taxon>Craniata</taxon>
        <taxon>Vertebrata</taxon>
        <taxon>Euteleostomi</taxon>
        <taxon>Mammalia</taxon>
        <taxon>Eutheria</taxon>
        <taxon>Euarchontoglires</taxon>
        <taxon>Primates</taxon>
        <taxon>Haplorrhini</taxon>
        <taxon>Catarrhini</taxon>
        <taxon>Hominidae</taxon>
        <taxon>Homo</taxon>
    </lineage>
</organism>
<evidence type="ECO:0000269" key="1">
    <source>
    </source>
</evidence>
<evidence type="ECO:0000269" key="2">
    <source>
    </source>
</evidence>
<evidence type="ECO:0000269" key="3">
    <source>
    </source>
</evidence>
<evidence type="ECO:0000303" key="4">
    <source>
    </source>
</evidence>
<evidence type="ECO:0000303" key="5">
    <source>
    </source>
</evidence>
<evidence type="ECO:0000303" key="6">
    <source>
    </source>
</evidence>
<evidence type="ECO:0000305" key="7"/>
<evidence type="ECO:0000305" key="8">
    <source>
    </source>
</evidence>
<evidence type="ECO:0000305" key="9">
    <source>
    </source>
</evidence>
<evidence type="ECO:0000312" key="10">
    <source>
        <dbReference type="HGNC" id="HGNC:28235"/>
    </source>
</evidence>
<evidence type="ECO:0007744" key="11">
    <source>
    </source>
</evidence>
<evidence type="ECO:0007744" key="12">
    <source>
    </source>
</evidence>
<evidence type="ECO:0007829" key="13">
    <source>
        <dbReference type="PDB" id="1IMJ"/>
    </source>
</evidence>
<comment type="function">
    <text evidence="2 3 7">Acts as an atypical protein-lysine deacetylase in vitro (PubMed:31478652). Catalyzes the deacetylation of lysine residues using CoA as substrate, generating acetyl-CoA and the free amine of protein-lysine residues (PubMed:31478652). Additional experiments are however required to confirm the protein-lysine deacetylase activity in vivo (Probable). Has hydrolase activity towards various surrogate p-nitrophenyl (pNp) substrates, such as pNp-butyrate, pNp-acetate and pNp-octanoate in vitro, with a strong preference for pNp-acetate (PubMed:14672934, PubMed:31478652). May activate transcription (PubMed:14672934).</text>
</comment>
<comment type="catalytic activity">
    <reaction evidence="9">
        <text>L-lysyl-[protein] + acetyl-CoA = N(6)-acetyl-L-lysyl-[protein] + CoA + H(+)</text>
        <dbReference type="Rhea" id="RHEA:45948"/>
        <dbReference type="Rhea" id="RHEA-COMP:9752"/>
        <dbReference type="Rhea" id="RHEA-COMP:10731"/>
        <dbReference type="ChEBI" id="CHEBI:15378"/>
        <dbReference type="ChEBI" id="CHEBI:29969"/>
        <dbReference type="ChEBI" id="CHEBI:57287"/>
        <dbReference type="ChEBI" id="CHEBI:57288"/>
        <dbReference type="ChEBI" id="CHEBI:61930"/>
    </reaction>
    <physiologicalReaction direction="right-to-left" evidence="9">
        <dbReference type="Rhea" id="RHEA:45950"/>
    </physiologicalReaction>
</comment>
<comment type="biophysicochemical properties">
    <kinetics>
        <KM evidence="3">1.8 mM for p-nitrophenyl-acetate</KM>
        <KM evidence="3">3.1 mM for p-nitrophenyl-butyrate</KM>
        <KM evidence="3">3.9 mM for p-nitrophenyl-octanoate</KM>
        <text evidence="3">kcat is 2.2 min(-1) for p-nitrophenyl-acetate (PubMed:31478652). kcat is 0.6 min(-1) for p-nitrophenyl-butyrate (PubMed:31478652). kcat is 0.2 min(-1) for p-nitrophenyl-octanoate (PubMed:31478652).</text>
    </kinetics>
</comment>
<comment type="subunit">
    <text evidence="1 2">May interact with TAF1.</text>
</comment>
<comment type="subcellular location">
    <subcellularLocation>
        <location evidence="1 2 3">Cytoplasm</location>
    </subcellularLocation>
    <subcellularLocation>
        <location evidence="1 2 3">Nucleus</location>
    </subcellularLocation>
    <text evidence="2">Predominantly cytoplasmic.</text>
</comment>
<comment type="alternative products">
    <event type="alternative splicing"/>
    <isoform>
        <id>Q96IU4-1</id>
        <name>1</name>
        <sequence type="displayed"/>
    </isoform>
    <isoform>
        <id>Q96IU4-2</id>
        <name>2</name>
        <sequence type="described" ref="VSP_008058"/>
    </isoform>
</comment>
<comment type="tissue specificity">
    <text evidence="2">Ubiquitous (PubMed:14672934). Detected in spleen, thymus, prostate, testis, ovary, small intestine, colon, peripheral blood leukocyte, heart, placenta, lung, liver, skeletal muscle, pancreas and kidney (PubMed:14672934).</text>
</comment>
<comment type="similarity">
    <text evidence="7">Belongs to the AB hydrolase superfamily. ABHD14 family.</text>
</comment>
<comment type="caution">
    <text evidence="9">The protein-lysine deacetylase activity using CoA as substrate is unclear as this protein belongs to a family of serine hydrolases, and that the reaction shown in the publication is not hydrolyzing H(2)O. Additional experiments are therefore required to confirm this activity in vivo.</text>
</comment>
<comment type="sequence caution" evidence="7">
    <conflict type="erroneous initiation">
        <sequence resource="EMBL-CDS" id="AAH50650"/>
    </conflict>
</comment>
<protein>
    <recommendedName>
        <fullName evidence="7">Putative protein-lysine deacylase ABHD14B</fullName>
        <ecNumber evidence="9">2.3.1.-</ecNumber>
    </recommendedName>
    <alternativeName>
        <fullName evidence="7">Alpha/beta hydrolase domain-containing protein 14B</fullName>
        <shortName evidence="10">Abhydrolase domain-containing protein 14B</shortName>
    </alternativeName>
    <alternativeName>
        <fullName evidence="4">CCG1-interacting factor B</fullName>
    </alternativeName>
</protein>
<sequence length="210" mass="22346">MAASVEQREGTIQVQGQALFFREALPGSGQARFSVLLLHGIRFSSETWQNLGTLHRLAQAGYRAVAIDLPGLGHSKEAAAPAPIGELAPGSFLAAVVDALELGPPVVISPSLSGMYSLPFLTAPGSQLPGFVPVAPICTDKINAANYASVKTPALIVYGDQDPMGQTSFEHLKQLPNHRVLIMKGAGHPCYLDKPEEWHTGLLDFLQGLQ</sequence>
<keyword id="KW-0002">3D-structure</keyword>
<keyword id="KW-0007">Acetylation</keyword>
<keyword id="KW-0012">Acyltransferase</keyword>
<keyword id="KW-0025">Alternative splicing</keyword>
<keyword id="KW-0963">Cytoplasm</keyword>
<keyword id="KW-0539">Nucleus</keyword>
<keyword id="KW-0597">Phosphoprotein</keyword>
<keyword id="KW-1267">Proteomics identification</keyword>
<keyword id="KW-1185">Reference proteome</keyword>
<keyword id="KW-0808">Transferase</keyword>
<gene>
    <name evidence="6 10" type="primary">ABHD14B</name>
    <name evidence="4" type="synonym">CIB</name>
</gene>
<accession>Q96IU4</accession>
<accession>Q86VK8</accession>
<accession>Q8N8W5</accession>
<feature type="initiator methionine" description="Removed" evidence="11">
    <location>
        <position position="1"/>
    </location>
</feature>
<feature type="chain" id="PRO_0000065038" description="Putative protein-lysine deacylase ABHD14B">
    <location>
        <begin position="2"/>
        <end position="210"/>
    </location>
</feature>
<feature type="active site" description="Charge relay system" evidence="8 9">
    <location>
        <position position="111"/>
    </location>
</feature>
<feature type="active site" description="Charge relay system" evidence="8">
    <location>
        <position position="162"/>
    </location>
</feature>
<feature type="active site" description="Charge relay system" evidence="8">
    <location>
        <position position="188"/>
    </location>
</feature>
<feature type="modified residue" description="N-acetylalanine" evidence="11">
    <location>
        <position position="2"/>
    </location>
</feature>
<feature type="modified residue" description="Phosphoserine" evidence="12">
    <location>
        <position position="91"/>
    </location>
</feature>
<feature type="splice variant" id="VSP_008058" description="In isoform 2." evidence="5">
    <original>MAASVEQREGTIQVQGQALFFREALPGSGQARFSVLLLHGIRFSSETWQNLGTLHRLAQAGYRAVAIDL</original>
    <variation>MGPGLFPAFLLRPQVTASTRLLPVCASPRSS</variation>
    <location>
        <begin position="1"/>
        <end position="69"/>
    </location>
</feature>
<feature type="mutagenesis site" description="Abolished protein-lysine deacetylase activity in vitro." evidence="3">
    <original>S</original>
    <variation>A</variation>
    <location>
        <position position="111"/>
    </location>
</feature>
<feature type="strand" evidence="13">
    <location>
        <begin position="5"/>
        <end position="7"/>
    </location>
</feature>
<feature type="strand" evidence="13">
    <location>
        <begin position="12"/>
        <end position="14"/>
    </location>
</feature>
<feature type="strand" evidence="13">
    <location>
        <begin position="17"/>
        <end position="19"/>
    </location>
</feature>
<feature type="strand" evidence="13">
    <location>
        <begin position="21"/>
        <end position="25"/>
    </location>
</feature>
<feature type="strand" evidence="13">
    <location>
        <begin position="27"/>
        <end position="29"/>
    </location>
</feature>
<feature type="strand" evidence="13">
    <location>
        <begin position="34"/>
        <end position="37"/>
    </location>
</feature>
<feature type="helix" evidence="13">
    <location>
        <begin position="45"/>
        <end position="51"/>
    </location>
</feature>
<feature type="helix" evidence="13">
    <location>
        <begin position="53"/>
        <end position="59"/>
    </location>
</feature>
<feature type="strand" evidence="13">
    <location>
        <begin position="63"/>
        <end position="67"/>
    </location>
</feature>
<feature type="helix" evidence="13">
    <location>
        <begin position="73"/>
        <end position="75"/>
    </location>
</feature>
<feature type="helix" evidence="13">
    <location>
        <begin position="91"/>
        <end position="100"/>
    </location>
</feature>
<feature type="strand" evidence="13">
    <location>
        <begin position="106"/>
        <end position="110"/>
    </location>
</feature>
<feature type="helix" evidence="13">
    <location>
        <begin position="111"/>
        <end position="113"/>
    </location>
</feature>
<feature type="helix" evidence="13">
    <location>
        <begin position="114"/>
        <end position="121"/>
    </location>
</feature>
<feature type="strand" evidence="13">
    <location>
        <begin position="129"/>
        <end position="135"/>
    </location>
</feature>
<feature type="helix" evidence="13">
    <location>
        <begin position="139"/>
        <end position="141"/>
    </location>
</feature>
<feature type="helix" evidence="13">
    <location>
        <begin position="144"/>
        <end position="148"/>
    </location>
</feature>
<feature type="strand" evidence="13">
    <location>
        <begin position="154"/>
        <end position="159"/>
    </location>
</feature>
<feature type="helix" evidence="13">
    <location>
        <begin position="163"/>
        <end position="172"/>
    </location>
</feature>
<feature type="strand" evidence="13">
    <location>
        <begin position="175"/>
        <end position="183"/>
    </location>
</feature>
<feature type="helix" evidence="13">
    <location>
        <begin position="190"/>
        <end position="193"/>
    </location>
</feature>
<feature type="helix" evidence="13">
    <location>
        <begin position="195"/>
        <end position="207"/>
    </location>
</feature>
<dbReference type="EC" id="2.3.1.-" evidence="9"/>
<dbReference type="EMBL" id="AK075034">
    <property type="protein sequence ID" value="BAC11366.1"/>
    <property type="molecule type" value="mRNA"/>
</dbReference>
<dbReference type="EMBL" id="AK075112">
    <property type="protein sequence ID" value="BAC11408.1"/>
    <property type="molecule type" value="mRNA"/>
</dbReference>
<dbReference type="EMBL" id="AK096073">
    <property type="protein sequence ID" value="BAC04696.1"/>
    <property type="molecule type" value="mRNA"/>
</dbReference>
<dbReference type="EMBL" id="BC007234">
    <property type="protein sequence ID" value="AAH07234.1"/>
    <property type="molecule type" value="mRNA"/>
</dbReference>
<dbReference type="EMBL" id="BC050650">
    <property type="protein sequence ID" value="AAH50650.1"/>
    <property type="status" value="ALT_INIT"/>
    <property type="molecule type" value="mRNA"/>
</dbReference>
<dbReference type="EMBL" id="BC056411">
    <property type="protein sequence ID" value="AAH56411.1"/>
    <property type="molecule type" value="mRNA"/>
</dbReference>
<dbReference type="CCDS" id="CCDS2842.1">
    <molecule id="Q96IU4-1"/>
</dbReference>
<dbReference type="RefSeq" id="NP_001139786.1">
    <molecule id="Q96IU4-1"/>
    <property type="nucleotide sequence ID" value="NM_001146314.2"/>
</dbReference>
<dbReference type="RefSeq" id="NP_001241682.1">
    <molecule id="Q96IU4-2"/>
    <property type="nucleotide sequence ID" value="NM_001254753.1"/>
</dbReference>
<dbReference type="RefSeq" id="NP_116139.1">
    <molecule id="Q96IU4-1"/>
    <property type="nucleotide sequence ID" value="NM_032750.3"/>
</dbReference>
<dbReference type="PDB" id="1IMJ">
    <property type="method" value="X-ray"/>
    <property type="resolution" value="2.20 A"/>
    <property type="chains" value="A=1-210"/>
</dbReference>
<dbReference type="PDBsum" id="1IMJ"/>
<dbReference type="SMR" id="Q96IU4"/>
<dbReference type="BioGRID" id="124289">
    <property type="interactions" value="29"/>
</dbReference>
<dbReference type="FunCoup" id="Q96IU4">
    <property type="interactions" value="1412"/>
</dbReference>
<dbReference type="IntAct" id="Q96IU4">
    <property type="interactions" value="8"/>
</dbReference>
<dbReference type="STRING" id="9606.ENSP00000420065"/>
<dbReference type="ESTHER" id="human-CIB">
    <property type="family name" value="CIB-CCG1-interacting-factor-B"/>
</dbReference>
<dbReference type="MEROPS" id="S33.983"/>
<dbReference type="GlyGen" id="Q96IU4">
    <property type="glycosylation" value="1 site, 1 O-linked glycan (1 site)"/>
</dbReference>
<dbReference type="iPTMnet" id="Q96IU4"/>
<dbReference type="MetOSite" id="Q96IU4"/>
<dbReference type="PhosphoSitePlus" id="Q96IU4"/>
<dbReference type="BioMuta" id="ABHD14B"/>
<dbReference type="DMDM" id="34222621"/>
<dbReference type="OGP" id="Q96IU4"/>
<dbReference type="REPRODUCTION-2DPAGE" id="IPI00063827"/>
<dbReference type="jPOST" id="Q96IU4"/>
<dbReference type="MassIVE" id="Q96IU4"/>
<dbReference type="PaxDb" id="9606-ENSP00000420065"/>
<dbReference type="PeptideAtlas" id="Q96IU4"/>
<dbReference type="ProteomicsDB" id="76854">
    <molecule id="Q96IU4-1"/>
</dbReference>
<dbReference type="ProteomicsDB" id="76855">
    <molecule id="Q96IU4-2"/>
</dbReference>
<dbReference type="Pumba" id="Q96IU4"/>
<dbReference type="TopDownProteomics" id="Q96IU4-1">
    <molecule id="Q96IU4-1"/>
</dbReference>
<dbReference type="Antibodypedia" id="46121">
    <property type="antibodies" value="246 antibodies from 30 providers"/>
</dbReference>
<dbReference type="DNASU" id="84836"/>
<dbReference type="Ensembl" id="ENST00000361143.10">
    <molecule id="Q96IU4-1"/>
    <property type="protein sequence ID" value="ENSP00000354841.5"/>
    <property type="gene ID" value="ENSG00000114779.20"/>
</dbReference>
<dbReference type="Ensembl" id="ENST00000395008.6">
    <molecule id="Q96IU4-1"/>
    <property type="protein sequence ID" value="ENSP00000378455.2"/>
    <property type="gene ID" value="ENSG00000114779.20"/>
</dbReference>
<dbReference type="Ensembl" id="ENST00000483233.5">
    <molecule id="Q96IU4-1"/>
    <property type="protein sequence ID" value="ENSP00000420065.1"/>
    <property type="gene ID" value="ENSG00000114779.20"/>
</dbReference>
<dbReference type="Ensembl" id="ENST00000525795.1">
    <molecule id="Q96IU4-1"/>
    <property type="protein sequence ID" value="ENSP00000433388.1"/>
    <property type="gene ID" value="ENSG00000114779.20"/>
</dbReference>
<dbReference type="GeneID" id="84836"/>
<dbReference type="KEGG" id="hsa:84836"/>
<dbReference type="MANE-Select" id="ENST00000361143.10">
    <property type="protein sequence ID" value="ENSP00000354841.5"/>
    <property type="RefSeq nucleotide sequence ID" value="NM_001146314.2"/>
    <property type="RefSeq protein sequence ID" value="NP_001139786.1"/>
</dbReference>
<dbReference type="AGR" id="HGNC:28235"/>
<dbReference type="CTD" id="84836"/>
<dbReference type="DisGeNET" id="84836"/>
<dbReference type="GeneCards" id="ABHD14B"/>
<dbReference type="HGNC" id="HGNC:28235">
    <property type="gene designation" value="ABHD14B"/>
</dbReference>
<dbReference type="HPA" id="ENSG00000114779">
    <property type="expression patterns" value="Low tissue specificity"/>
</dbReference>
<dbReference type="MIM" id="621040">
    <property type="type" value="gene"/>
</dbReference>
<dbReference type="neXtProt" id="NX_Q96IU4"/>
<dbReference type="OpenTargets" id="ENSG00000114779"/>
<dbReference type="PharmGKB" id="PA142672660"/>
<dbReference type="VEuPathDB" id="HostDB:ENSG00000114779"/>
<dbReference type="eggNOG" id="ENOG502QR0B">
    <property type="taxonomic scope" value="Eukaryota"/>
</dbReference>
<dbReference type="GeneTree" id="ENSGT00940000159388"/>
<dbReference type="HOGENOM" id="CLU_020336_28_0_1"/>
<dbReference type="InParanoid" id="Q96IU4"/>
<dbReference type="OMA" id="GEVVLWY"/>
<dbReference type="OrthoDB" id="284184at2759"/>
<dbReference type="PAN-GO" id="Q96IU4">
    <property type="GO annotations" value="3 GO annotations based on evolutionary models"/>
</dbReference>
<dbReference type="PhylomeDB" id="Q96IU4"/>
<dbReference type="TreeFam" id="TF314465"/>
<dbReference type="BioCyc" id="MetaCyc:ENSG00000114779-MONOMER"/>
<dbReference type="PathwayCommons" id="Q96IU4"/>
<dbReference type="Reactome" id="R-HSA-156584">
    <property type="pathway name" value="Cytosolic sulfonation of small molecules"/>
</dbReference>
<dbReference type="SignaLink" id="Q96IU4"/>
<dbReference type="BioGRID-ORCS" id="84836">
    <property type="hits" value="13 hits in 1167 CRISPR screens"/>
</dbReference>
<dbReference type="ChiTaRS" id="ABHD14B">
    <property type="organism name" value="human"/>
</dbReference>
<dbReference type="EvolutionaryTrace" id="Q96IU4"/>
<dbReference type="GenomeRNAi" id="84836"/>
<dbReference type="Pharos" id="Q96IU4">
    <property type="development level" value="Tdark"/>
</dbReference>
<dbReference type="PRO" id="PR:Q96IU4"/>
<dbReference type="Proteomes" id="UP000005640">
    <property type="component" value="Chromosome 3"/>
</dbReference>
<dbReference type="RNAct" id="Q96IU4">
    <property type="molecule type" value="protein"/>
</dbReference>
<dbReference type="Bgee" id="ENSG00000114779">
    <property type="expression patterns" value="Expressed in ileal mucosa and 169 other cell types or tissues"/>
</dbReference>
<dbReference type="ExpressionAtlas" id="Q96IU4">
    <property type="expression patterns" value="baseline and differential"/>
</dbReference>
<dbReference type="GO" id="GO:0005737">
    <property type="term" value="C:cytoplasm"/>
    <property type="evidence" value="ECO:0000318"/>
    <property type="project" value="GO_Central"/>
</dbReference>
<dbReference type="GO" id="GO:0005829">
    <property type="term" value="C:cytosol"/>
    <property type="evidence" value="ECO:0000314"/>
    <property type="project" value="HPA"/>
</dbReference>
<dbReference type="GO" id="GO:0070062">
    <property type="term" value="C:extracellular exosome"/>
    <property type="evidence" value="ECO:0007005"/>
    <property type="project" value="UniProtKB"/>
</dbReference>
<dbReference type="GO" id="GO:0005730">
    <property type="term" value="C:nucleolus"/>
    <property type="evidence" value="ECO:0000314"/>
    <property type="project" value="HPA"/>
</dbReference>
<dbReference type="GO" id="GO:0005654">
    <property type="term" value="C:nucleoplasm"/>
    <property type="evidence" value="ECO:0000314"/>
    <property type="project" value="HPA"/>
</dbReference>
<dbReference type="GO" id="GO:0005634">
    <property type="term" value="C:nucleus"/>
    <property type="evidence" value="ECO:0000314"/>
    <property type="project" value="UniProtKB"/>
</dbReference>
<dbReference type="GO" id="GO:0016787">
    <property type="term" value="F:hydrolase activity"/>
    <property type="evidence" value="ECO:0000314"/>
    <property type="project" value="UniProtKB"/>
</dbReference>
<dbReference type="GO" id="GO:0061733">
    <property type="term" value="F:protein-lysine-acetyltransferase activity"/>
    <property type="evidence" value="ECO:0007669"/>
    <property type="project" value="RHEA"/>
</dbReference>
<dbReference type="GO" id="GO:0050427">
    <property type="term" value="P:3'-phosphoadenosine 5'-phosphosulfate metabolic process"/>
    <property type="evidence" value="ECO:0000304"/>
    <property type="project" value="Reactome"/>
</dbReference>
<dbReference type="GO" id="GO:0045944">
    <property type="term" value="P:positive regulation of transcription by RNA polymerase II"/>
    <property type="evidence" value="ECO:0000314"/>
    <property type="project" value="UniProtKB"/>
</dbReference>
<dbReference type="FunFam" id="3.40.50.1820:FF:000077">
    <property type="entry name" value="Abhydrolase domain containing 14B"/>
    <property type="match status" value="1"/>
</dbReference>
<dbReference type="Gene3D" id="3.40.50.1820">
    <property type="entry name" value="alpha/beta hydrolase"/>
    <property type="match status" value="1"/>
</dbReference>
<dbReference type="InterPro" id="IPR000073">
    <property type="entry name" value="AB_hydrolase_1"/>
</dbReference>
<dbReference type="InterPro" id="IPR029058">
    <property type="entry name" value="AB_hydrolase_fold"/>
</dbReference>
<dbReference type="PANTHER" id="PTHR46197">
    <property type="entry name" value="PROTEIN ABHD14B-LIKE"/>
    <property type="match status" value="1"/>
</dbReference>
<dbReference type="PANTHER" id="PTHR46197:SF2">
    <property type="entry name" value="PROTEIN-LYSINE DEACYLASE ABHD14B-RELATED"/>
    <property type="match status" value="1"/>
</dbReference>
<dbReference type="Pfam" id="PF12697">
    <property type="entry name" value="Abhydrolase_6"/>
    <property type="match status" value="1"/>
</dbReference>
<dbReference type="SUPFAM" id="SSF53474">
    <property type="entry name" value="alpha/beta-Hydrolases"/>
    <property type="match status" value="1"/>
</dbReference>
<reference key="1">
    <citation type="journal article" date="2004" name="Nat. Genet.">
        <title>Complete sequencing and characterization of 21,243 full-length human cDNAs.</title>
        <authorList>
            <person name="Ota T."/>
            <person name="Suzuki Y."/>
            <person name="Nishikawa T."/>
            <person name="Otsuki T."/>
            <person name="Sugiyama T."/>
            <person name="Irie R."/>
            <person name="Wakamatsu A."/>
            <person name="Hayashi K."/>
            <person name="Sato H."/>
            <person name="Nagai K."/>
            <person name="Kimura K."/>
            <person name="Makita H."/>
            <person name="Sekine M."/>
            <person name="Obayashi M."/>
            <person name="Nishi T."/>
            <person name="Shibahara T."/>
            <person name="Tanaka T."/>
            <person name="Ishii S."/>
            <person name="Yamamoto J."/>
            <person name="Saito K."/>
            <person name="Kawai Y."/>
            <person name="Isono Y."/>
            <person name="Nakamura Y."/>
            <person name="Nagahari K."/>
            <person name="Murakami K."/>
            <person name="Yasuda T."/>
            <person name="Iwayanagi T."/>
            <person name="Wagatsuma M."/>
            <person name="Shiratori A."/>
            <person name="Sudo H."/>
            <person name="Hosoiri T."/>
            <person name="Kaku Y."/>
            <person name="Kodaira H."/>
            <person name="Kondo H."/>
            <person name="Sugawara M."/>
            <person name="Takahashi M."/>
            <person name="Kanda K."/>
            <person name="Yokoi T."/>
            <person name="Furuya T."/>
            <person name="Kikkawa E."/>
            <person name="Omura Y."/>
            <person name="Abe K."/>
            <person name="Kamihara K."/>
            <person name="Katsuta N."/>
            <person name="Sato K."/>
            <person name="Tanikawa M."/>
            <person name="Yamazaki M."/>
            <person name="Ninomiya K."/>
            <person name="Ishibashi T."/>
            <person name="Yamashita H."/>
            <person name="Murakawa K."/>
            <person name="Fujimori K."/>
            <person name="Tanai H."/>
            <person name="Kimata M."/>
            <person name="Watanabe M."/>
            <person name="Hiraoka S."/>
            <person name="Chiba Y."/>
            <person name="Ishida S."/>
            <person name="Ono Y."/>
            <person name="Takiguchi S."/>
            <person name="Watanabe S."/>
            <person name="Yosida M."/>
            <person name="Hotuta T."/>
            <person name="Kusano J."/>
            <person name="Kanehori K."/>
            <person name="Takahashi-Fujii A."/>
            <person name="Hara H."/>
            <person name="Tanase T.-O."/>
            <person name="Nomura Y."/>
            <person name="Togiya S."/>
            <person name="Komai F."/>
            <person name="Hara R."/>
            <person name="Takeuchi K."/>
            <person name="Arita M."/>
            <person name="Imose N."/>
            <person name="Musashino K."/>
            <person name="Yuuki H."/>
            <person name="Oshima A."/>
            <person name="Sasaki N."/>
            <person name="Aotsuka S."/>
            <person name="Yoshikawa Y."/>
            <person name="Matsunawa H."/>
            <person name="Ichihara T."/>
            <person name="Shiohata N."/>
            <person name="Sano S."/>
            <person name="Moriya S."/>
            <person name="Momiyama H."/>
            <person name="Satoh N."/>
            <person name="Takami S."/>
            <person name="Terashima Y."/>
            <person name="Suzuki O."/>
            <person name="Nakagawa S."/>
            <person name="Senoh A."/>
            <person name="Mizoguchi H."/>
            <person name="Goto Y."/>
            <person name="Shimizu F."/>
            <person name="Wakebe H."/>
            <person name="Hishigaki H."/>
            <person name="Watanabe T."/>
            <person name="Sugiyama A."/>
            <person name="Takemoto M."/>
            <person name="Kawakami B."/>
            <person name="Yamazaki M."/>
            <person name="Watanabe K."/>
            <person name="Kumagai A."/>
            <person name="Itakura S."/>
            <person name="Fukuzumi Y."/>
            <person name="Fujimori Y."/>
            <person name="Komiyama M."/>
            <person name="Tashiro H."/>
            <person name="Tanigami A."/>
            <person name="Fujiwara T."/>
            <person name="Ono T."/>
            <person name="Yamada K."/>
            <person name="Fujii Y."/>
            <person name="Ozaki K."/>
            <person name="Hirao M."/>
            <person name="Ohmori Y."/>
            <person name="Kawabata A."/>
            <person name="Hikiji T."/>
            <person name="Kobatake N."/>
            <person name="Inagaki H."/>
            <person name="Ikema Y."/>
            <person name="Okamoto S."/>
            <person name="Okitani R."/>
            <person name="Kawakami T."/>
            <person name="Noguchi S."/>
            <person name="Itoh T."/>
            <person name="Shigeta K."/>
            <person name="Senba T."/>
            <person name="Matsumura K."/>
            <person name="Nakajima Y."/>
            <person name="Mizuno T."/>
            <person name="Morinaga M."/>
            <person name="Sasaki M."/>
            <person name="Togashi T."/>
            <person name="Oyama M."/>
            <person name="Hata H."/>
            <person name="Watanabe M."/>
            <person name="Komatsu T."/>
            <person name="Mizushima-Sugano J."/>
            <person name="Satoh T."/>
            <person name="Shirai Y."/>
            <person name="Takahashi Y."/>
            <person name="Nakagawa K."/>
            <person name="Okumura K."/>
            <person name="Nagase T."/>
            <person name="Nomura N."/>
            <person name="Kikuchi H."/>
            <person name="Masuho Y."/>
            <person name="Yamashita R."/>
            <person name="Nakai K."/>
            <person name="Yada T."/>
            <person name="Nakamura Y."/>
            <person name="Ohara O."/>
            <person name="Isogai T."/>
            <person name="Sugano S."/>
        </authorList>
    </citation>
    <scope>NUCLEOTIDE SEQUENCE [LARGE SCALE MRNA] (ISOFORMS 1 AND 2)</scope>
    <source>
        <tissue>Kidney</tissue>
        <tissue>Ovarian carcinoma</tissue>
        <tissue>Placenta</tissue>
    </source>
</reference>
<reference key="2">
    <citation type="journal article" date="2004" name="Genome Res.">
        <title>The status, quality, and expansion of the NIH full-length cDNA project: the Mammalian Gene Collection (MGC).</title>
        <authorList>
            <consortium name="The MGC Project Team"/>
        </authorList>
    </citation>
    <scope>NUCLEOTIDE SEQUENCE [LARGE SCALE MRNA] (ISOFORM 1)</scope>
    <source>
        <tissue>Lung</tissue>
        <tissue>Skin</tissue>
    </source>
</reference>
<reference key="3">
    <citation type="journal article" date="2011" name="BMC Syst. Biol.">
        <title>Initial characterization of the human central proteome.</title>
        <authorList>
            <person name="Burkard T.R."/>
            <person name="Planyavsky M."/>
            <person name="Kaupe I."/>
            <person name="Breitwieser F.P."/>
            <person name="Buerckstuemmer T."/>
            <person name="Bennett K.L."/>
            <person name="Superti-Furga G."/>
            <person name="Colinge J."/>
        </authorList>
    </citation>
    <scope>IDENTIFICATION BY MASS SPECTROMETRY [LARGE SCALE ANALYSIS]</scope>
</reference>
<reference key="4">
    <citation type="journal article" date="2012" name="Proc. Natl. Acad. Sci. U.S.A.">
        <title>N-terminal acetylome analyses and functional insights of the N-terminal acetyltransferase NatB.</title>
        <authorList>
            <person name="Van Damme P."/>
            <person name="Lasa M."/>
            <person name="Polevoda B."/>
            <person name="Gazquez C."/>
            <person name="Elosegui-Artola A."/>
            <person name="Kim D.S."/>
            <person name="De Juan-Pardo E."/>
            <person name="Demeyer K."/>
            <person name="Hole K."/>
            <person name="Larrea E."/>
            <person name="Timmerman E."/>
            <person name="Prieto J."/>
            <person name="Arnesen T."/>
            <person name="Sherman F."/>
            <person name="Gevaert K."/>
            <person name="Aldabe R."/>
        </authorList>
    </citation>
    <scope>ACETYLATION [LARGE SCALE ANALYSIS] AT ALA-2</scope>
    <scope>CLEAVAGE OF INITIATOR METHIONINE [LARGE SCALE ANALYSIS]</scope>
    <scope>IDENTIFICATION BY MASS SPECTROMETRY [LARGE SCALE ANALYSIS]</scope>
</reference>
<reference key="5">
    <citation type="journal article" date="2014" name="J. Proteomics">
        <title>An enzyme assisted RP-RPLC approach for in-depth analysis of human liver phosphoproteome.</title>
        <authorList>
            <person name="Bian Y."/>
            <person name="Song C."/>
            <person name="Cheng K."/>
            <person name="Dong M."/>
            <person name="Wang F."/>
            <person name="Huang J."/>
            <person name="Sun D."/>
            <person name="Wang L."/>
            <person name="Ye M."/>
            <person name="Zou H."/>
        </authorList>
    </citation>
    <scope>PHOSPHORYLATION [LARGE SCALE ANALYSIS] AT SER-91</scope>
    <scope>IDENTIFICATION BY MASS SPECTROMETRY [LARGE SCALE ANALYSIS]</scope>
    <source>
        <tissue>Liver</tissue>
    </source>
</reference>
<reference key="6">
    <citation type="journal article" date="2015" name="Proteomics">
        <title>N-terminome analysis of the human mitochondrial proteome.</title>
        <authorList>
            <person name="Vaca Jacome A.S."/>
            <person name="Rabilloud T."/>
            <person name="Schaeffer-Reiss C."/>
            <person name="Rompais M."/>
            <person name="Ayoub D."/>
            <person name="Lane L."/>
            <person name="Bairoch A."/>
            <person name="Van Dorsselaer A."/>
            <person name="Carapito C."/>
        </authorList>
    </citation>
    <scope>IDENTIFICATION BY MASS SPECTROMETRY [LARGE SCALE ANALYSIS]</scope>
</reference>
<reference key="7">
    <citation type="journal article" date="2020" name="Biochemistry">
        <title>Functional annotation of ABHD14B, an orphan serine hydrolase enzyme.</title>
        <authorList>
            <person name="Rajendran A."/>
            <person name="Vaidya K."/>
            <person name="Mendoza J."/>
            <person name="Bridwell-Rabb J."/>
            <person name="Kamat S.S."/>
        </authorList>
    </citation>
    <scope>FUNCTION</scope>
    <scope>CATALYTIC ACTIVITY</scope>
    <scope>BIOPHYSICOCHEMICAL PROPERTIES</scope>
    <scope>SUBCELLULAR LOCATION</scope>
    <scope>MUTAGENESIS OF SER-111</scope>
</reference>
<reference key="8">
    <citation type="journal article" date="2000" name="Acta Crystallogr. D">
        <title>Purification, crystallization and preliminary X-ray crystallographic analysis of human CCG1-interacting factor B.</title>
        <authorList>
            <person name="Padmanabhan B."/>
            <person name="Kuzuhara T."/>
            <person name="Mizuno H."/>
            <person name="Horikoshi M."/>
        </authorList>
    </citation>
    <scope>X-RAY CRYSTALLOGRAPHY (2.2 ANGSTROMS)</scope>
    <scope>INTERACTION WITH TAF1</scope>
    <scope>SUBCELLULAR LOCATION</scope>
</reference>
<reference key="9">
    <citation type="journal article" date="2004" name="J. Biol. Chem.">
        <title>The crystal structure of CCG1/TAF(II)250-interacting factor B (CIB).</title>
        <authorList>
            <person name="Padmanabhan B."/>
            <person name="Kuzuhara T."/>
            <person name="Adachi N."/>
            <person name="Horikoshi M."/>
        </authorList>
    </citation>
    <scope>X-RAY CRYSTALLOGRAPHY (2.2 ANGSTROMS)</scope>
    <scope>FUNCTION</scope>
    <scope>ACTIVE SITES</scope>
    <scope>SUBCELLULAR LOCATION</scope>
    <scope>INTERACTION WITH TAF1</scope>
    <scope>TISSUE SPECIFICITY</scope>
</reference>